<dbReference type="EMBL" id="AJ251865">
    <property type="protein sequence ID" value="CAB63800.1"/>
    <property type="molecule type" value="mRNA"/>
</dbReference>
<dbReference type="EMBL" id="AC018363">
    <property type="protein sequence ID" value="AAF26960.1"/>
    <property type="molecule type" value="Genomic_DNA"/>
</dbReference>
<dbReference type="EMBL" id="CP002686">
    <property type="protein sequence ID" value="AEE73888.1"/>
    <property type="molecule type" value="Genomic_DNA"/>
</dbReference>
<dbReference type="EMBL" id="BT026365">
    <property type="protein sequence ID" value="ABH04472.1"/>
    <property type="molecule type" value="mRNA"/>
</dbReference>
<dbReference type="RefSeq" id="NP_186949.1">
    <property type="nucleotide sequence ID" value="NM_111169.5"/>
</dbReference>
<dbReference type="SMR" id="Q9SCW5"/>
<dbReference type="BioGRID" id="6495">
    <property type="interactions" value="10"/>
</dbReference>
<dbReference type="FunCoup" id="Q9SCW5">
    <property type="interactions" value="1109"/>
</dbReference>
<dbReference type="IntAct" id="Q9SCW5">
    <property type="interactions" value="9"/>
</dbReference>
<dbReference type="STRING" id="3702.Q9SCW5"/>
<dbReference type="iPTMnet" id="Q9SCW5"/>
<dbReference type="PaxDb" id="3702-AT3G02990.1"/>
<dbReference type="ProteomicsDB" id="230238"/>
<dbReference type="EnsemblPlants" id="AT3G02990.1">
    <property type="protein sequence ID" value="AT3G02990.1"/>
    <property type="gene ID" value="AT3G02990"/>
</dbReference>
<dbReference type="GeneID" id="821162"/>
<dbReference type="Gramene" id="AT3G02990.1">
    <property type="protein sequence ID" value="AT3G02990.1"/>
    <property type="gene ID" value="AT3G02990"/>
</dbReference>
<dbReference type="KEGG" id="ath:AT3G02990"/>
<dbReference type="Araport" id="AT3G02990"/>
<dbReference type="TAIR" id="AT3G02990">
    <property type="gene designation" value="HSFA1E"/>
</dbReference>
<dbReference type="eggNOG" id="KOG0627">
    <property type="taxonomic scope" value="Eukaryota"/>
</dbReference>
<dbReference type="HOGENOM" id="CLU_030308_0_2_1"/>
<dbReference type="InParanoid" id="Q9SCW5"/>
<dbReference type="OMA" id="DDEFWEL"/>
<dbReference type="PhylomeDB" id="Q9SCW5"/>
<dbReference type="PRO" id="PR:Q9SCW5"/>
<dbReference type="Proteomes" id="UP000006548">
    <property type="component" value="Chromosome 3"/>
</dbReference>
<dbReference type="ExpressionAtlas" id="Q9SCW5">
    <property type="expression patterns" value="baseline and differential"/>
</dbReference>
<dbReference type="GO" id="GO:0005737">
    <property type="term" value="C:cytoplasm"/>
    <property type="evidence" value="ECO:0007669"/>
    <property type="project" value="UniProtKB-SubCell"/>
</dbReference>
<dbReference type="GO" id="GO:0005634">
    <property type="term" value="C:nucleus"/>
    <property type="evidence" value="ECO:0000314"/>
    <property type="project" value="TAIR"/>
</dbReference>
<dbReference type="GO" id="GO:0003700">
    <property type="term" value="F:DNA-binding transcription factor activity"/>
    <property type="evidence" value="ECO:0000250"/>
    <property type="project" value="TAIR"/>
</dbReference>
<dbReference type="GO" id="GO:0043565">
    <property type="term" value="F:sequence-specific DNA binding"/>
    <property type="evidence" value="ECO:0007669"/>
    <property type="project" value="InterPro"/>
</dbReference>
<dbReference type="FunFam" id="1.10.10.10:FF:000057">
    <property type="entry name" value="Heat shock transcription factor 1"/>
    <property type="match status" value="1"/>
</dbReference>
<dbReference type="Gene3D" id="1.10.10.10">
    <property type="entry name" value="Winged helix-like DNA-binding domain superfamily/Winged helix DNA-binding domain"/>
    <property type="match status" value="1"/>
</dbReference>
<dbReference type="InterPro" id="IPR000232">
    <property type="entry name" value="HSF_DNA-bd"/>
</dbReference>
<dbReference type="InterPro" id="IPR036388">
    <property type="entry name" value="WH-like_DNA-bd_sf"/>
</dbReference>
<dbReference type="InterPro" id="IPR036390">
    <property type="entry name" value="WH_DNA-bd_sf"/>
</dbReference>
<dbReference type="PANTHER" id="PTHR10015">
    <property type="entry name" value="HEAT SHOCK TRANSCRIPTION FACTOR"/>
    <property type="match status" value="1"/>
</dbReference>
<dbReference type="PANTHER" id="PTHR10015:SF467">
    <property type="entry name" value="HEAT STRESS TRANSCRIPTION FACTOR A-1E"/>
    <property type="match status" value="1"/>
</dbReference>
<dbReference type="Pfam" id="PF00447">
    <property type="entry name" value="HSF_DNA-bind"/>
    <property type="match status" value="1"/>
</dbReference>
<dbReference type="PRINTS" id="PR00056">
    <property type="entry name" value="HSFDOMAIN"/>
</dbReference>
<dbReference type="SMART" id="SM00415">
    <property type="entry name" value="HSF"/>
    <property type="match status" value="1"/>
</dbReference>
<dbReference type="SUPFAM" id="SSF46785">
    <property type="entry name" value="Winged helix' DNA-binding domain"/>
    <property type="match status" value="1"/>
</dbReference>
<dbReference type="PROSITE" id="PS00434">
    <property type="entry name" value="HSF_DOMAIN"/>
    <property type="match status" value="1"/>
</dbReference>
<organism>
    <name type="scientific">Arabidopsis thaliana</name>
    <name type="common">Mouse-ear cress</name>
    <dbReference type="NCBI Taxonomy" id="3702"/>
    <lineage>
        <taxon>Eukaryota</taxon>
        <taxon>Viridiplantae</taxon>
        <taxon>Streptophyta</taxon>
        <taxon>Embryophyta</taxon>
        <taxon>Tracheophyta</taxon>
        <taxon>Spermatophyta</taxon>
        <taxon>Magnoliopsida</taxon>
        <taxon>eudicotyledons</taxon>
        <taxon>Gunneridae</taxon>
        <taxon>Pentapetalae</taxon>
        <taxon>rosids</taxon>
        <taxon>malvids</taxon>
        <taxon>Brassicales</taxon>
        <taxon>Brassicaceae</taxon>
        <taxon>Camelineae</taxon>
        <taxon>Arabidopsis</taxon>
    </lineage>
</organism>
<comment type="function">
    <text>Transcriptional activator that specifically binds DNA sequence 5'-AGAAnnTTCT-3' known as heat shock promoter elements (HSE).</text>
</comment>
<comment type="subunit">
    <text evidence="1">Homotrimer.</text>
</comment>
<comment type="subcellular location">
    <subcellularLocation>
        <location evidence="5">Cytoplasm</location>
    </subcellularLocation>
    <subcellularLocation>
        <location evidence="5">Nucleus</location>
    </subcellularLocation>
</comment>
<comment type="domain">
    <text evidence="4">The hydrophobic-rich region (HR-A/B) corresponds to the oligomerization domain. AHA motif is a transcriptional activator element.</text>
</comment>
<comment type="PTM">
    <text evidence="1">Exhibits temperature-dependent phosphorylation.</text>
</comment>
<comment type="similarity">
    <text evidence="5">Belongs to the HSF family. Class A subfamily.</text>
</comment>
<feature type="chain" id="PRO_0000124583" description="Heat stress transcription factor A-1e">
    <location>
        <begin position="1"/>
        <end position="468"/>
    </location>
</feature>
<feature type="DNA-binding region" evidence="1">
    <location>
        <begin position="21"/>
        <end position="115"/>
    </location>
</feature>
<feature type="region of interest" description="Hydrophobic repeat HR-A/B">
    <location>
        <begin position="133"/>
        <end position="199"/>
    </location>
</feature>
<feature type="region of interest" description="Disordered" evidence="3">
    <location>
        <begin position="211"/>
        <end position="244"/>
    </location>
</feature>
<feature type="region of interest" description="Disordered" evidence="3">
    <location>
        <begin position="268"/>
        <end position="309"/>
    </location>
</feature>
<feature type="short sequence motif" description="Nuclear localization signal" evidence="2">
    <location>
        <begin position="223"/>
        <end position="227"/>
    </location>
</feature>
<feature type="short sequence motif" description="AHA">
    <location>
        <begin position="402"/>
        <end position="411"/>
    </location>
</feature>
<feature type="short sequence motif" description="Nuclear export signal" evidence="2">
    <location>
        <begin position="454"/>
        <end position="461"/>
    </location>
</feature>
<feature type="compositionally biased region" description="Polar residues" evidence="3">
    <location>
        <begin position="211"/>
        <end position="220"/>
    </location>
</feature>
<feature type="compositionally biased region" description="Low complexity" evidence="3">
    <location>
        <begin position="277"/>
        <end position="305"/>
    </location>
</feature>
<feature type="sequence conflict" description="In Ref. 1; CAB63800." evidence="5" ref="1">
    <original>K</original>
    <variation>N</variation>
    <location>
        <position position="68"/>
    </location>
</feature>
<proteinExistence type="evidence at transcript level"/>
<gene>
    <name type="primary">HSFA1E</name>
    <name type="synonym">HSF06</name>
    <name type="synonym">HSF2</name>
    <name type="ordered locus">At3g02990</name>
    <name type="ORF">F13E7.6</name>
</gene>
<protein>
    <recommendedName>
        <fullName>Heat stress transcription factor A-1e</fullName>
        <shortName>AtHsfA1e</shortName>
    </recommendedName>
    <alternativeName>
        <fullName>AtHsf-06</fullName>
    </alternativeName>
    <alternativeName>
        <fullName>Heat shock factor protein 2</fullName>
        <shortName>HSF 2</shortName>
    </alternativeName>
    <alternativeName>
        <fullName>Heat shock transcription factor 2</fullName>
        <shortName>HSTF 2</shortName>
    </alternativeName>
</protein>
<reference key="1">
    <citation type="book" date="1999" name="Plant responses to environmental stress">
        <title>De-repression of heat shock protein synthesis in transgenic plants.</title>
        <editorList>
            <person name="Smallwood M.F."/>
            <person name="Calvert C.M."/>
            <person name="Bowles D.J."/>
        </editorList>
        <authorList>
            <person name="Schoeffl F."/>
            <person name="Praendl R."/>
        </authorList>
    </citation>
    <scope>NUCLEOTIDE SEQUENCE [MRNA]</scope>
    <source>
        <strain>cv. Columbia</strain>
        <tissue>Green siliques</tissue>
    </source>
</reference>
<reference key="2">
    <citation type="journal article" date="2000" name="Nature">
        <title>Sequence and analysis of chromosome 3 of the plant Arabidopsis thaliana.</title>
        <authorList>
            <person name="Salanoubat M."/>
            <person name="Lemcke K."/>
            <person name="Rieger M."/>
            <person name="Ansorge W."/>
            <person name="Unseld M."/>
            <person name="Fartmann B."/>
            <person name="Valle G."/>
            <person name="Bloecker H."/>
            <person name="Perez-Alonso M."/>
            <person name="Obermaier B."/>
            <person name="Delseny M."/>
            <person name="Boutry M."/>
            <person name="Grivell L.A."/>
            <person name="Mache R."/>
            <person name="Puigdomenech P."/>
            <person name="De Simone V."/>
            <person name="Choisne N."/>
            <person name="Artiguenave F."/>
            <person name="Robert C."/>
            <person name="Brottier P."/>
            <person name="Wincker P."/>
            <person name="Cattolico L."/>
            <person name="Weissenbach J."/>
            <person name="Saurin W."/>
            <person name="Quetier F."/>
            <person name="Schaefer M."/>
            <person name="Mueller-Auer S."/>
            <person name="Gabel C."/>
            <person name="Fuchs M."/>
            <person name="Benes V."/>
            <person name="Wurmbach E."/>
            <person name="Drzonek H."/>
            <person name="Erfle H."/>
            <person name="Jordan N."/>
            <person name="Bangert S."/>
            <person name="Wiedelmann R."/>
            <person name="Kranz H."/>
            <person name="Voss H."/>
            <person name="Holland R."/>
            <person name="Brandt P."/>
            <person name="Nyakatura G."/>
            <person name="Vezzi A."/>
            <person name="D'Angelo M."/>
            <person name="Pallavicini A."/>
            <person name="Toppo S."/>
            <person name="Simionati B."/>
            <person name="Conrad A."/>
            <person name="Hornischer K."/>
            <person name="Kauer G."/>
            <person name="Loehnert T.-H."/>
            <person name="Nordsiek G."/>
            <person name="Reichelt J."/>
            <person name="Scharfe M."/>
            <person name="Schoen O."/>
            <person name="Bargues M."/>
            <person name="Terol J."/>
            <person name="Climent J."/>
            <person name="Navarro P."/>
            <person name="Collado C."/>
            <person name="Perez-Perez A."/>
            <person name="Ottenwaelder B."/>
            <person name="Duchemin D."/>
            <person name="Cooke R."/>
            <person name="Laudie M."/>
            <person name="Berger-Llauro C."/>
            <person name="Purnelle B."/>
            <person name="Masuy D."/>
            <person name="de Haan M."/>
            <person name="Maarse A.C."/>
            <person name="Alcaraz J.-P."/>
            <person name="Cottet A."/>
            <person name="Casacuberta E."/>
            <person name="Monfort A."/>
            <person name="Argiriou A."/>
            <person name="Flores M."/>
            <person name="Liguori R."/>
            <person name="Vitale D."/>
            <person name="Mannhaupt G."/>
            <person name="Haase D."/>
            <person name="Schoof H."/>
            <person name="Rudd S."/>
            <person name="Zaccaria P."/>
            <person name="Mewes H.-W."/>
            <person name="Mayer K.F.X."/>
            <person name="Kaul S."/>
            <person name="Town C.D."/>
            <person name="Koo H.L."/>
            <person name="Tallon L.J."/>
            <person name="Jenkins J."/>
            <person name="Rooney T."/>
            <person name="Rizzo M."/>
            <person name="Walts A."/>
            <person name="Utterback T."/>
            <person name="Fujii C.Y."/>
            <person name="Shea T.P."/>
            <person name="Creasy T.H."/>
            <person name="Haas B."/>
            <person name="Maiti R."/>
            <person name="Wu D."/>
            <person name="Peterson J."/>
            <person name="Van Aken S."/>
            <person name="Pai G."/>
            <person name="Militscher J."/>
            <person name="Sellers P."/>
            <person name="Gill J.E."/>
            <person name="Feldblyum T.V."/>
            <person name="Preuss D."/>
            <person name="Lin X."/>
            <person name="Nierman W.C."/>
            <person name="Salzberg S.L."/>
            <person name="White O."/>
            <person name="Venter J.C."/>
            <person name="Fraser C.M."/>
            <person name="Kaneko T."/>
            <person name="Nakamura Y."/>
            <person name="Sato S."/>
            <person name="Kato T."/>
            <person name="Asamizu E."/>
            <person name="Sasamoto S."/>
            <person name="Kimura T."/>
            <person name="Idesawa K."/>
            <person name="Kawashima K."/>
            <person name="Kishida Y."/>
            <person name="Kiyokawa C."/>
            <person name="Kohara M."/>
            <person name="Matsumoto M."/>
            <person name="Matsuno A."/>
            <person name="Muraki A."/>
            <person name="Nakayama S."/>
            <person name="Nakazaki N."/>
            <person name="Shinpo S."/>
            <person name="Takeuchi C."/>
            <person name="Wada T."/>
            <person name="Watanabe A."/>
            <person name="Yamada M."/>
            <person name="Yasuda M."/>
            <person name="Tabata S."/>
        </authorList>
    </citation>
    <scope>NUCLEOTIDE SEQUENCE [LARGE SCALE GENOMIC DNA]</scope>
    <source>
        <strain>cv. Columbia</strain>
    </source>
</reference>
<reference key="3">
    <citation type="journal article" date="2017" name="Plant J.">
        <title>Araport11: a complete reannotation of the Arabidopsis thaliana reference genome.</title>
        <authorList>
            <person name="Cheng C.Y."/>
            <person name="Krishnakumar V."/>
            <person name="Chan A.P."/>
            <person name="Thibaud-Nissen F."/>
            <person name="Schobel S."/>
            <person name="Town C.D."/>
        </authorList>
    </citation>
    <scope>GENOME REANNOTATION</scope>
    <source>
        <strain>cv. Columbia</strain>
    </source>
</reference>
<reference key="4">
    <citation type="submission" date="2006-08" db="EMBL/GenBank/DDBJ databases">
        <title>Arabidopsis ORF clones.</title>
        <authorList>
            <person name="Quinitio C."/>
            <person name="Chen H."/>
            <person name="Kim C.J."/>
            <person name="Shinn P."/>
            <person name="Ecker J.R."/>
        </authorList>
    </citation>
    <scope>NUCLEOTIDE SEQUENCE [LARGE SCALE MRNA]</scope>
    <source>
        <strain>cv. Columbia</strain>
    </source>
</reference>
<reference key="5">
    <citation type="journal article" date="2001" name="Cell Stress Chaperones">
        <title>Arabidopsis and the heat stress transcription factor world: how many heat stress transcription factors do we need?</title>
        <authorList>
            <person name="Nover L."/>
            <person name="Bharti K."/>
            <person name="Doering P."/>
            <person name="Mishra S.K."/>
            <person name="Ganguli A."/>
            <person name="Scharf K.-D."/>
        </authorList>
    </citation>
    <scope>GENE FAMILY</scope>
    <scope>NOMENCLATURE</scope>
    <scope>DOMAIN AHA</scope>
</reference>
<reference key="6">
    <citation type="journal article" date="2008" name="J. Genet. Genomics">
        <title>Genome-wide analysis of heat shock transcription factor families in rice and Arabidopsis.</title>
        <authorList>
            <person name="Guo J."/>
            <person name="Wu J."/>
            <person name="Ji Q."/>
            <person name="Wang C."/>
            <person name="Luo L."/>
            <person name="Yuan Y."/>
            <person name="Wang Y."/>
            <person name="Wang J."/>
        </authorList>
    </citation>
    <scope>GENE FAMILY</scope>
    <scope>NOMENCLATURE</scope>
</reference>
<keyword id="KW-0010">Activator</keyword>
<keyword id="KW-0963">Cytoplasm</keyword>
<keyword id="KW-0238">DNA-binding</keyword>
<keyword id="KW-0539">Nucleus</keyword>
<keyword id="KW-0597">Phosphoprotein</keyword>
<keyword id="KW-1185">Reference proteome</keyword>
<keyword id="KW-0346">Stress response</keyword>
<keyword id="KW-0804">Transcription</keyword>
<keyword id="KW-0805">Transcription regulation</keyword>
<sequence length="468" mass="51963">MGTVCESVATAKSSTAVMSSIPPFLSKTYDMVDDPLTDDVVSWSSGNNSFVVWNVPEFAKQFLPKYFKHNNFSSFVRQLNTYGFRKVDPDRWEFANEGFLRGQKQILKSIVRRKPAQVQPPQQPQVQHSSVGACVEVGKFGLEEEVERLQRDKNVLMQELVRLRQQQQVTEHHLQNVGQKVHVMEQRQQQMMSFLAKAVQSPGFLNQFSQQSNEANQHISESNKKRRLPVEDQMNSGSHGVNGLSRQIVRYQSSMNDATNTMLQQIQQMSNAPSHESLSSNNGSFLLGDVPNSNISDNGSSSNGSPEVTLADVSSIPAGFYPAMKYHEPCETNQVMETNLPFSQGDLLPPTQGAAASGSSSSDLVGCETDNGECLDPIMAVLDGALELEADTLNELLPEVQDSFWEQFIGESPVIGETDELISGSVENELILEQLELQSTLSNVWSKNQQMNHLTEQMGLLTSDALRK</sequence>
<name>HFA1E_ARATH</name>
<accession>Q9SCW5</accession>
<accession>Q0V855</accession>
<accession>Q9M8U0</accession>
<evidence type="ECO:0000250" key="1"/>
<evidence type="ECO:0000255" key="2"/>
<evidence type="ECO:0000256" key="3">
    <source>
        <dbReference type="SAM" id="MobiDB-lite"/>
    </source>
</evidence>
<evidence type="ECO:0000269" key="4">
    <source>
    </source>
</evidence>
<evidence type="ECO:0000305" key="5"/>